<feature type="chain" id="PRO_0000413693" description="Proline-rich basic protein 1">
    <location>
        <begin position="1"/>
        <end position="1015"/>
    </location>
</feature>
<feature type="region of interest" description="Disordered" evidence="1">
    <location>
        <begin position="1"/>
        <end position="111"/>
    </location>
</feature>
<feature type="region of interest" description="Disordered" evidence="1">
    <location>
        <begin position="139"/>
        <end position="164"/>
    </location>
</feature>
<feature type="region of interest" description="Disordered" evidence="1">
    <location>
        <begin position="196"/>
        <end position="236"/>
    </location>
</feature>
<feature type="region of interest" description="Disordered" evidence="1">
    <location>
        <begin position="259"/>
        <end position="460"/>
    </location>
</feature>
<feature type="region of interest" description="Disordered" evidence="1">
    <location>
        <begin position="488"/>
        <end position="678"/>
    </location>
</feature>
<feature type="region of interest" description="Disordered" evidence="1">
    <location>
        <begin position="690"/>
        <end position="883"/>
    </location>
</feature>
<feature type="region of interest" description="Disordered" evidence="1">
    <location>
        <begin position="991"/>
        <end position="1015"/>
    </location>
</feature>
<feature type="compositionally biased region" description="Gly residues" evidence="1">
    <location>
        <begin position="84"/>
        <end position="94"/>
    </location>
</feature>
<feature type="compositionally biased region" description="Low complexity" evidence="1">
    <location>
        <begin position="220"/>
        <end position="233"/>
    </location>
</feature>
<feature type="compositionally biased region" description="Polar residues" evidence="1">
    <location>
        <begin position="267"/>
        <end position="276"/>
    </location>
</feature>
<feature type="compositionally biased region" description="Basic and acidic residues" evidence="1">
    <location>
        <begin position="277"/>
        <end position="304"/>
    </location>
</feature>
<feature type="compositionally biased region" description="Basic and acidic residues" evidence="1">
    <location>
        <begin position="318"/>
        <end position="328"/>
    </location>
</feature>
<feature type="compositionally biased region" description="Basic and acidic residues" evidence="1">
    <location>
        <begin position="346"/>
        <end position="367"/>
    </location>
</feature>
<feature type="compositionally biased region" description="Low complexity" evidence="1">
    <location>
        <begin position="380"/>
        <end position="391"/>
    </location>
</feature>
<feature type="compositionally biased region" description="Polar residues" evidence="1">
    <location>
        <begin position="531"/>
        <end position="542"/>
    </location>
</feature>
<feature type="compositionally biased region" description="Pro residues" evidence="1">
    <location>
        <begin position="548"/>
        <end position="557"/>
    </location>
</feature>
<feature type="compositionally biased region" description="Pro residues" evidence="1">
    <location>
        <begin position="691"/>
        <end position="700"/>
    </location>
</feature>
<feature type="compositionally biased region" description="Basic and acidic residues" evidence="1">
    <location>
        <begin position="759"/>
        <end position="774"/>
    </location>
</feature>
<feature type="compositionally biased region" description="Pro residues" evidence="1">
    <location>
        <begin position="813"/>
        <end position="825"/>
    </location>
</feature>
<feature type="compositionally biased region" description="Low complexity" evidence="1">
    <location>
        <begin position="826"/>
        <end position="835"/>
    </location>
</feature>
<feature type="compositionally biased region" description="Low complexity" evidence="1">
    <location>
        <begin position="847"/>
        <end position="858"/>
    </location>
</feature>
<feature type="compositionally biased region" description="Polar residues" evidence="1">
    <location>
        <begin position="861"/>
        <end position="870"/>
    </location>
</feature>
<feature type="compositionally biased region" description="Low complexity" evidence="1">
    <location>
        <begin position="993"/>
        <end position="1004"/>
    </location>
</feature>
<feature type="sequence conflict" description="In Ref. 2; BAG64269/BAH14854." evidence="2" ref="2">
    <original>V</original>
    <variation>A</variation>
    <location>
        <position position="763"/>
    </location>
</feature>
<gene>
    <name type="primary">PROB1</name>
    <name type="synonym">C5orf65</name>
</gene>
<proteinExistence type="evidence at protein level"/>
<protein>
    <recommendedName>
        <fullName>Proline-rich basic protein 1</fullName>
    </recommendedName>
</protein>
<reference key="1">
    <citation type="journal article" date="2004" name="Nature">
        <title>The DNA sequence and comparative analysis of human chromosome 5.</title>
        <authorList>
            <person name="Schmutz J."/>
            <person name="Martin J."/>
            <person name="Terry A."/>
            <person name="Couronne O."/>
            <person name="Grimwood J."/>
            <person name="Lowry S."/>
            <person name="Gordon L.A."/>
            <person name="Scott D."/>
            <person name="Xie G."/>
            <person name="Huang W."/>
            <person name="Hellsten U."/>
            <person name="Tran-Gyamfi M."/>
            <person name="She X."/>
            <person name="Prabhakar S."/>
            <person name="Aerts A."/>
            <person name="Altherr M."/>
            <person name="Bajorek E."/>
            <person name="Black S."/>
            <person name="Branscomb E."/>
            <person name="Caoile C."/>
            <person name="Challacombe J.F."/>
            <person name="Chan Y.M."/>
            <person name="Denys M."/>
            <person name="Detter J.C."/>
            <person name="Escobar J."/>
            <person name="Flowers D."/>
            <person name="Fotopulos D."/>
            <person name="Glavina T."/>
            <person name="Gomez M."/>
            <person name="Gonzales E."/>
            <person name="Goodstein D."/>
            <person name="Grigoriev I."/>
            <person name="Groza M."/>
            <person name="Hammon N."/>
            <person name="Hawkins T."/>
            <person name="Haydu L."/>
            <person name="Israni S."/>
            <person name="Jett J."/>
            <person name="Kadner K."/>
            <person name="Kimball H."/>
            <person name="Kobayashi A."/>
            <person name="Lopez F."/>
            <person name="Lou Y."/>
            <person name="Martinez D."/>
            <person name="Medina C."/>
            <person name="Morgan J."/>
            <person name="Nandkeshwar R."/>
            <person name="Noonan J.P."/>
            <person name="Pitluck S."/>
            <person name="Pollard M."/>
            <person name="Predki P."/>
            <person name="Priest J."/>
            <person name="Ramirez L."/>
            <person name="Retterer J."/>
            <person name="Rodriguez A."/>
            <person name="Rogers S."/>
            <person name="Salamov A."/>
            <person name="Salazar A."/>
            <person name="Thayer N."/>
            <person name="Tice H."/>
            <person name="Tsai M."/>
            <person name="Ustaszewska A."/>
            <person name="Vo N."/>
            <person name="Wheeler J."/>
            <person name="Wu K."/>
            <person name="Yang J."/>
            <person name="Dickson M."/>
            <person name="Cheng J.-F."/>
            <person name="Eichler E.E."/>
            <person name="Olsen A."/>
            <person name="Pennacchio L.A."/>
            <person name="Rokhsar D.S."/>
            <person name="Richardson P."/>
            <person name="Lucas S.M."/>
            <person name="Myers R.M."/>
            <person name="Rubin E.M."/>
        </authorList>
    </citation>
    <scope>NUCLEOTIDE SEQUENCE [LARGE SCALE GENOMIC DNA]</scope>
</reference>
<reference key="2">
    <citation type="journal article" date="2004" name="Nat. Genet.">
        <title>Complete sequencing and characterization of 21,243 full-length human cDNAs.</title>
        <authorList>
            <person name="Ota T."/>
            <person name="Suzuki Y."/>
            <person name="Nishikawa T."/>
            <person name="Otsuki T."/>
            <person name="Sugiyama T."/>
            <person name="Irie R."/>
            <person name="Wakamatsu A."/>
            <person name="Hayashi K."/>
            <person name="Sato H."/>
            <person name="Nagai K."/>
            <person name="Kimura K."/>
            <person name="Makita H."/>
            <person name="Sekine M."/>
            <person name="Obayashi M."/>
            <person name="Nishi T."/>
            <person name="Shibahara T."/>
            <person name="Tanaka T."/>
            <person name="Ishii S."/>
            <person name="Yamamoto J."/>
            <person name="Saito K."/>
            <person name="Kawai Y."/>
            <person name="Isono Y."/>
            <person name="Nakamura Y."/>
            <person name="Nagahari K."/>
            <person name="Murakami K."/>
            <person name="Yasuda T."/>
            <person name="Iwayanagi T."/>
            <person name="Wagatsuma M."/>
            <person name="Shiratori A."/>
            <person name="Sudo H."/>
            <person name="Hosoiri T."/>
            <person name="Kaku Y."/>
            <person name="Kodaira H."/>
            <person name="Kondo H."/>
            <person name="Sugawara M."/>
            <person name="Takahashi M."/>
            <person name="Kanda K."/>
            <person name="Yokoi T."/>
            <person name="Furuya T."/>
            <person name="Kikkawa E."/>
            <person name="Omura Y."/>
            <person name="Abe K."/>
            <person name="Kamihara K."/>
            <person name="Katsuta N."/>
            <person name="Sato K."/>
            <person name="Tanikawa M."/>
            <person name="Yamazaki M."/>
            <person name="Ninomiya K."/>
            <person name="Ishibashi T."/>
            <person name="Yamashita H."/>
            <person name="Murakawa K."/>
            <person name="Fujimori K."/>
            <person name="Tanai H."/>
            <person name="Kimata M."/>
            <person name="Watanabe M."/>
            <person name="Hiraoka S."/>
            <person name="Chiba Y."/>
            <person name="Ishida S."/>
            <person name="Ono Y."/>
            <person name="Takiguchi S."/>
            <person name="Watanabe S."/>
            <person name="Yosida M."/>
            <person name="Hotuta T."/>
            <person name="Kusano J."/>
            <person name="Kanehori K."/>
            <person name="Takahashi-Fujii A."/>
            <person name="Hara H."/>
            <person name="Tanase T.-O."/>
            <person name="Nomura Y."/>
            <person name="Togiya S."/>
            <person name="Komai F."/>
            <person name="Hara R."/>
            <person name="Takeuchi K."/>
            <person name="Arita M."/>
            <person name="Imose N."/>
            <person name="Musashino K."/>
            <person name="Yuuki H."/>
            <person name="Oshima A."/>
            <person name="Sasaki N."/>
            <person name="Aotsuka S."/>
            <person name="Yoshikawa Y."/>
            <person name="Matsunawa H."/>
            <person name="Ichihara T."/>
            <person name="Shiohata N."/>
            <person name="Sano S."/>
            <person name="Moriya S."/>
            <person name="Momiyama H."/>
            <person name="Satoh N."/>
            <person name="Takami S."/>
            <person name="Terashima Y."/>
            <person name="Suzuki O."/>
            <person name="Nakagawa S."/>
            <person name="Senoh A."/>
            <person name="Mizoguchi H."/>
            <person name="Goto Y."/>
            <person name="Shimizu F."/>
            <person name="Wakebe H."/>
            <person name="Hishigaki H."/>
            <person name="Watanabe T."/>
            <person name="Sugiyama A."/>
            <person name="Takemoto M."/>
            <person name="Kawakami B."/>
            <person name="Yamazaki M."/>
            <person name="Watanabe K."/>
            <person name="Kumagai A."/>
            <person name="Itakura S."/>
            <person name="Fukuzumi Y."/>
            <person name="Fujimori Y."/>
            <person name="Komiyama M."/>
            <person name="Tashiro H."/>
            <person name="Tanigami A."/>
            <person name="Fujiwara T."/>
            <person name="Ono T."/>
            <person name="Yamada K."/>
            <person name="Fujii Y."/>
            <person name="Ozaki K."/>
            <person name="Hirao M."/>
            <person name="Ohmori Y."/>
            <person name="Kawabata A."/>
            <person name="Hikiji T."/>
            <person name="Kobatake N."/>
            <person name="Inagaki H."/>
            <person name="Ikema Y."/>
            <person name="Okamoto S."/>
            <person name="Okitani R."/>
            <person name="Kawakami T."/>
            <person name="Noguchi S."/>
            <person name="Itoh T."/>
            <person name="Shigeta K."/>
            <person name="Senba T."/>
            <person name="Matsumura K."/>
            <person name="Nakajima Y."/>
            <person name="Mizuno T."/>
            <person name="Morinaga M."/>
            <person name="Sasaki M."/>
            <person name="Togashi T."/>
            <person name="Oyama M."/>
            <person name="Hata H."/>
            <person name="Watanabe M."/>
            <person name="Komatsu T."/>
            <person name="Mizushima-Sugano J."/>
            <person name="Satoh T."/>
            <person name="Shirai Y."/>
            <person name="Takahashi Y."/>
            <person name="Nakagawa K."/>
            <person name="Okumura K."/>
            <person name="Nagase T."/>
            <person name="Nomura N."/>
            <person name="Kikuchi H."/>
            <person name="Masuho Y."/>
            <person name="Yamashita R."/>
            <person name="Nakai K."/>
            <person name="Yada T."/>
            <person name="Nakamura Y."/>
            <person name="Ohara O."/>
            <person name="Isogai T."/>
            <person name="Sugano S."/>
        </authorList>
    </citation>
    <scope>NUCLEOTIDE SEQUENCE [LARGE SCALE MRNA] OF 548-1015</scope>
    <source>
        <tissue>Thymus</tissue>
    </source>
</reference>
<name>PROB1_HUMAN</name>
<organism>
    <name type="scientific">Homo sapiens</name>
    <name type="common">Human</name>
    <dbReference type="NCBI Taxonomy" id="9606"/>
    <lineage>
        <taxon>Eukaryota</taxon>
        <taxon>Metazoa</taxon>
        <taxon>Chordata</taxon>
        <taxon>Craniata</taxon>
        <taxon>Vertebrata</taxon>
        <taxon>Euteleostomi</taxon>
        <taxon>Mammalia</taxon>
        <taxon>Eutheria</taxon>
        <taxon>Euarchontoglires</taxon>
        <taxon>Primates</taxon>
        <taxon>Haplorrhini</taxon>
        <taxon>Catarrhini</taxon>
        <taxon>Hominidae</taxon>
        <taxon>Homo</taxon>
    </lineage>
</organism>
<dbReference type="EMBL" id="AC135457">
    <property type="status" value="NOT_ANNOTATED_CDS"/>
    <property type="molecule type" value="Genomic_DNA"/>
</dbReference>
<dbReference type="EMBL" id="AK303170">
    <property type="protein sequence ID" value="BAG64269.1"/>
    <property type="status" value="ALT_INIT"/>
    <property type="molecule type" value="mRNA"/>
</dbReference>
<dbReference type="EMBL" id="AK316483">
    <property type="protein sequence ID" value="BAH14854.1"/>
    <property type="status" value="ALT_INIT"/>
    <property type="molecule type" value="mRNA"/>
</dbReference>
<dbReference type="CCDS" id="CCDS54909.1"/>
<dbReference type="RefSeq" id="NP_001155018.1">
    <property type="nucleotide sequence ID" value="NM_001161546.2"/>
</dbReference>
<dbReference type="BioGRID" id="133097">
    <property type="interactions" value="1"/>
</dbReference>
<dbReference type="FunCoup" id="E7EW31">
    <property type="interactions" value="167"/>
</dbReference>
<dbReference type="STRING" id="9606.ENSP00000416033"/>
<dbReference type="GlyGen" id="E7EW31">
    <property type="glycosylation" value="2 sites"/>
</dbReference>
<dbReference type="iPTMnet" id="E7EW31"/>
<dbReference type="PhosphoSitePlus" id="E7EW31"/>
<dbReference type="BioMuta" id="PROB1"/>
<dbReference type="jPOST" id="E7EW31"/>
<dbReference type="MassIVE" id="E7EW31"/>
<dbReference type="PaxDb" id="9606-ENSP00000416033"/>
<dbReference type="PeptideAtlas" id="E7EW31"/>
<dbReference type="ProteomicsDB" id="18759"/>
<dbReference type="Antibodypedia" id="64696">
    <property type="antibodies" value="5 antibodies from 5 providers"/>
</dbReference>
<dbReference type="DNASU" id="389333"/>
<dbReference type="Ensembl" id="ENST00000434752.4">
    <property type="protein sequence ID" value="ENSP00000416033.2"/>
    <property type="gene ID" value="ENSG00000228672.4"/>
</dbReference>
<dbReference type="GeneID" id="389333"/>
<dbReference type="KEGG" id="hsa:389333"/>
<dbReference type="MANE-Select" id="ENST00000434752.4">
    <property type="protein sequence ID" value="ENSP00000416033.2"/>
    <property type="RefSeq nucleotide sequence ID" value="NM_001161546.2"/>
    <property type="RefSeq protein sequence ID" value="NP_001155018.1"/>
</dbReference>
<dbReference type="UCSC" id="uc011czc.2">
    <property type="organism name" value="human"/>
</dbReference>
<dbReference type="AGR" id="HGNC:41906"/>
<dbReference type="CTD" id="389333"/>
<dbReference type="DisGeNET" id="389333"/>
<dbReference type="GeneCards" id="PROB1"/>
<dbReference type="HGNC" id="HGNC:41906">
    <property type="gene designation" value="PROB1"/>
</dbReference>
<dbReference type="HPA" id="ENSG00000228672">
    <property type="expression patterns" value="Tissue enhanced (heart muscle, skeletal muscle)"/>
</dbReference>
<dbReference type="neXtProt" id="NX_E7EW31"/>
<dbReference type="OpenTargets" id="ENSG00000228672"/>
<dbReference type="VEuPathDB" id="HostDB:ENSG00000228672"/>
<dbReference type="eggNOG" id="ENOG502S8N1">
    <property type="taxonomic scope" value="Eukaryota"/>
</dbReference>
<dbReference type="GeneTree" id="ENSGT00730000111496"/>
<dbReference type="HOGENOM" id="CLU_012186_0_0_1"/>
<dbReference type="InParanoid" id="E7EW31"/>
<dbReference type="OMA" id="AQFECVE"/>
<dbReference type="OrthoDB" id="9933339at2759"/>
<dbReference type="PAN-GO" id="E7EW31">
    <property type="GO annotations" value="1 GO annotation based on evolutionary models"/>
</dbReference>
<dbReference type="PhylomeDB" id="E7EW31"/>
<dbReference type="TreeFam" id="TF343894"/>
<dbReference type="PathwayCommons" id="E7EW31"/>
<dbReference type="BioGRID-ORCS" id="389333">
    <property type="hits" value="16 hits in 1146 CRISPR screens"/>
</dbReference>
<dbReference type="ChiTaRS" id="PROB1">
    <property type="organism name" value="human"/>
</dbReference>
<dbReference type="GenomeRNAi" id="389333"/>
<dbReference type="Pharos" id="E7EW31">
    <property type="development level" value="Tdark"/>
</dbReference>
<dbReference type="PRO" id="PR:E7EW31"/>
<dbReference type="Proteomes" id="UP000005640">
    <property type="component" value="Chromosome 5"/>
</dbReference>
<dbReference type="RNAct" id="E7EW31">
    <property type="molecule type" value="protein"/>
</dbReference>
<dbReference type="Bgee" id="ENSG00000228672">
    <property type="expression patterns" value="Expressed in quadriceps femoris and 96 other cell types or tissues"/>
</dbReference>
<dbReference type="GO" id="GO:0005654">
    <property type="term" value="C:nucleoplasm"/>
    <property type="evidence" value="ECO:0000314"/>
    <property type="project" value="HPA"/>
</dbReference>
<dbReference type="InterPro" id="IPR052303">
    <property type="entry name" value="CEFIP"/>
</dbReference>
<dbReference type="InterPro" id="IPR027838">
    <property type="entry name" value="DUF4585"/>
</dbReference>
<dbReference type="PANTHER" id="PTHR33775">
    <property type="entry name" value="CARDIAC-ENRICHED FHL2-INTERACTING PROTEIN-RELATED"/>
    <property type="match status" value="1"/>
</dbReference>
<dbReference type="PANTHER" id="PTHR33775:SF1">
    <property type="entry name" value="PROLINE-RICH BASIC PROTEIN 1"/>
    <property type="match status" value="1"/>
</dbReference>
<dbReference type="Pfam" id="PF15232">
    <property type="entry name" value="DUF4585"/>
    <property type="match status" value="1"/>
</dbReference>
<evidence type="ECO:0000256" key="1">
    <source>
        <dbReference type="SAM" id="MobiDB-lite"/>
    </source>
</evidence>
<evidence type="ECO:0000305" key="2"/>
<sequence>MLTALAPPALPGIPRQLPTAPARRQDSSGSSGSYYTAPGSPEPPDVGPDAKGPANWPWVAPGRGAGAQPRLSVSAQNSRQRHGPGSGFPRGPGSGPRPPQPQLRTLPSGEMEVIFGVGPLFGCSGADDREAQQQFTEPAFISPLPPGPASPAAVPRQSQVPDGGSRWATYLELRPRGPSPAAPAQFECVEVALEEGAAPARPRTVPKRQIELRPRPQSPPRAAGAPRPRLLLRTGSLDESLGPLQAAAGFVQTALARKLSPEAPAPSSATFGSTGRSEPETRETARSTHVVLEKAKSRPLRVRDNSAPAKAPRPWPSLRERAIRRDKPAPGTEPLGPVSSSIFLQSEEKIQEARKTRFPREAPDRTVQRARSPPFECRIPSEVPSRAVRPRSPSPPRQTPNGAVRGPRCPSPQNLSPWDRTTRRVSSPLFPEASSEWENQNPAVEETVSRRSPSPPILSQWNQCVAGERSPSLEAPSLWEIPHSAVADAVEPRSSPSPPAFFPWEAPDRPIGTWGPSPQETWDPMGPGSSIAFTQEAQNGLTQEELAPPTPSAPGTPEPTEMQSPSTREISDLAFGGSQQSPEVAAPEPPGSHPVGTLDADKCPEVLGPGEAASGRPRMAIPRPRDVRKLVKTTYAPGFPAGAQGSGLPAPPADPCGEEGGESKTQEPPALGPPAPAHYTSVFIKDFLPVVPHPYEPPEPSFDTVARDASQPNGVLRRRAENSTAKPFKRTEIRLPGALALGRRPEVTSRVRARGPGGENRDVEAQRLVPDGDGRTSPLGGARSSSQRSPVGPAGVRSPRPGSPQMQASPSPGIAPKPKTPPTAPEPAAAVQAPLPREPLALAGRTAPAQPRAASAPPTDRSPQSPSQGARRQPGAAPLGKVLVDPESGRYYFVEAPRQPRLRVLFDPESGQYVEVLLPPSSPGPPHRVYTPLALGLGLYPPAYGPIPSLSLPPSPGPQALGSPQLPWVSEAGPLDGTYYLPVSGTPNPAPPLLLCAPPSSSGPTQPGKGSLFPL</sequence>
<accession>E7EW31</accession>
<accession>B4E007</accession>
<keyword id="KW-1267">Proteomics identification</keyword>
<keyword id="KW-1185">Reference proteome</keyword>
<comment type="sequence caution" evidence="2">
    <conflict type="erroneous initiation">
        <sequence resource="EMBL-CDS" id="BAG64269"/>
    </conflict>
    <text>Truncated N-terminus.</text>
</comment>
<comment type="sequence caution" evidence="2">
    <conflict type="erroneous initiation">
        <sequence resource="EMBL-CDS" id="BAH14854"/>
    </conflict>
    <text>Truncated N-terminus.</text>
</comment>